<evidence type="ECO:0000250" key="1"/>
<evidence type="ECO:0000255" key="2">
    <source>
        <dbReference type="PROSITE-ProRule" id="PRU00176"/>
    </source>
</evidence>
<evidence type="ECO:0000256" key="3">
    <source>
        <dbReference type="SAM" id="MobiDB-lite"/>
    </source>
</evidence>
<reference key="1">
    <citation type="journal article" date="1993" name="Nucleic Acids Res.">
        <title>Three new members of the RNP protein family in Xenopus.</title>
        <authorList>
            <person name="Good P.J."/>
            <person name="Rebbert M.L."/>
            <person name="Dawid I.B."/>
        </authorList>
    </citation>
    <scope>NUCLEOTIDE SEQUENCE [MRNA]</scope>
</reference>
<organism>
    <name type="scientific">Xenopus laevis</name>
    <name type="common">African clawed frog</name>
    <dbReference type="NCBI Taxonomy" id="8355"/>
    <lineage>
        <taxon>Eukaryota</taxon>
        <taxon>Metazoa</taxon>
        <taxon>Chordata</taxon>
        <taxon>Craniata</taxon>
        <taxon>Vertebrata</taxon>
        <taxon>Euteleostomi</taxon>
        <taxon>Amphibia</taxon>
        <taxon>Batrachia</taxon>
        <taxon>Anura</taxon>
        <taxon>Pipoidea</taxon>
        <taxon>Pipidae</taxon>
        <taxon>Xenopodinae</taxon>
        <taxon>Xenopus</taxon>
        <taxon>Xenopus</taxon>
    </lineage>
</organism>
<keyword id="KW-0539">Nucleus</keyword>
<keyword id="KW-1185">Reference proteome</keyword>
<keyword id="KW-0677">Repeat</keyword>
<keyword id="KW-0687">Ribonucleoprotein</keyword>
<keyword id="KW-0694">RNA-binding</keyword>
<accession>P51968</accession>
<name>RO31_XENLA</name>
<dbReference type="EMBL" id="L02956">
    <property type="protein sequence ID" value="AAA49949.1"/>
    <property type="molecule type" value="mRNA"/>
</dbReference>
<dbReference type="PIR" id="S40777">
    <property type="entry name" value="S40777"/>
</dbReference>
<dbReference type="RefSeq" id="NP_001081318.1">
    <property type="nucleotide sequence ID" value="NM_001087849.1"/>
</dbReference>
<dbReference type="SMR" id="P51968"/>
<dbReference type="GeneID" id="397772"/>
<dbReference type="KEGG" id="xla:397772"/>
<dbReference type="AGR" id="Xenbase:XB-GENE-17331347"/>
<dbReference type="CTD" id="397772"/>
<dbReference type="Xenbase" id="XB-GENE-17331347">
    <property type="gene designation" value="hnrnpa3.L"/>
</dbReference>
<dbReference type="OrthoDB" id="1875751at2759"/>
<dbReference type="Proteomes" id="UP000186698">
    <property type="component" value="Chromosome 9_10L"/>
</dbReference>
<dbReference type="Bgee" id="397772">
    <property type="expression patterns" value="Expressed in internal ear and 19 other cell types or tissues"/>
</dbReference>
<dbReference type="GO" id="GO:0071013">
    <property type="term" value="C:catalytic step 2 spliceosome"/>
    <property type="evidence" value="ECO:0000318"/>
    <property type="project" value="GO_Central"/>
</dbReference>
<dbReference type="GO" id="GO:0003730">
    <property type="term" value="F:mRNA 3'-UTR binding"/>
    <property type="evidence" value="ECO:0007669"/>
    <property type="project" value="TreeGrafter"/>
</dbReference>
<dbReference type="GO" id="GO:0000398">
    <property type="term" value="P:mRNA splicing, via spliceosome"/>
    <property type="evidence" value="ECO:0000318"/>
    <property type="project" value="GO_Central"/>
</dbReference>
<dbReference type="CDD" id="cd12578">
    <property type="entry name" value="RRM1_hnRNPA_like"/>
    <property type="match status" value="1"/>
</dbReference>
<dbReference type="CDD" id="cd12582">
    <property type="entry name" value="RRM2_hnRNPA3"/>
    <property type="match status" value="1"/>
</dbReference>
<dbReference type="FunFam" id="3.30.70.330:FF:000158">
    <property type="entry name" value="heterogeneous nuclear ribonucleoprotein A3 isoform X1"/>
    <property type="match status" value="1"/>
</dbReference>
<dbReference type="FunFam" id="3.30.70.330:FF:000350">
    <property type="entry name" value="heterogeneous nuclear ribonucleoprotein A3 isoform X1"/>
    <property type="match status" value="1"/>
</dbReference>
<dbReference type="Gene3D" id="3.30.70.330">
    <property type="match status" value="2"/>
</dbReference>
<dbReference type="InterPro" id="IPR034516">
    <property type="entry name" value="hnRNPA1/3_RRM2"/>
</dbReference>
<dbReference type="InterPro" id="IPR012677">
    <property type="entry name" value="Nucleotide-bd_a/b_plait_sf"/>
</dbReference>
<dbReference type="InterPro" id="IPR035979">
    <property type="entry name" value="RBD_domain_sf"/>
</dbReference>
<dbReference type="InterPro" id="IPR000504">
    <property type="entry name" value="RRM_dom"/>
</dbReference>
<dbReference type="PANTHER" id="PTHR48026:SF12">
    <property type="entry name" value="HETEROGENEOUS NUCLEAR RIBONUCLEOPROTEIN A3"/>
    <property type="match status" value="1"/>
</dbReference>
<dbReference type="PANTHER" id="PTHR48026">
    <property type="entry name" value="HOMOLOGOUS TO DROSOPHILA SQD (SQUID) PROTEIN"/>
    <property type="match status" value="1"/>
</dbReference>
<dbReference type="Pfam" id="PF00076">
    <property type="entry name" value="RRM_1"/>
    <property type="match status" value="2"/>
</dbReference>
<dbReference type="SMART" id="SM00360">
    <property type="entry name" value="RRM"/>
    <property type="match status" value="2"/>
</dbReference>
<dbReference type="SUPFAM" id="SSF54928">
    <property type="entry name" value="RNA-binding domain, RBD"/>
    <property type="match status" value="2"/>
</dbReference>
<dbReference type="PROSITE" id="PS50102">
    <property type="entry name" value="RRM"/>
    <property type="match status" value="2"/>
</dbReference>
<protein>
    <recommendedName>
        <fullName>Heterogeneous nuclear ribonucleoprotein A3 homolog 1</fullName>
    </recommendedName>
    <alternativeName>
        <fullName>hnRNP A3(A)</fullName>
    </alternativeName>
</protein>
<sequence>MPRGGMDDHWPSSDDQGHDPKEPEQLRKLFIGGLSFETTDDSLREHFEQWGKLTDCVVMRDPQTKRSRGFGFVTYSCVEEVDASMSARPHKVDGRVVEPKRAVSREDSARPGAHLTVKKIFVGGIKEDTEEYHLRDYSESYGKIETIEVMEDRQSGKKRGFAFVTFDDHDTVDKIVVQKYHTINGHNCEVKKALSKQEMQTASAQRGRGGGGSNFMGRGGNYGGGDGGNFGRGGGGGFGNRGGYGGGGGRGGGGYGGGGDGYNGFGGDGGNYGGGPGYGGRGYGGSPGYGNQGGGYGGGGGGYDGYNESGNFGGGNYNDFGNYGGQQQSNYGPMKGGSFSGRSSGGSGSGPYGGGYGSGGGGGGGGSYGGRRF</sequence>
<proteinExistence type="evidence at transcript level"/>
<feature type="chain" id="PRO_0000081824" description="Heterogeneous nuclear ribonucleoprotein A3 homolog 1">
    <location>
        <begin position="1"/>
        <end position="373"/>
    </location>
</feature>
<feature type="domain" description="RRM 1" evidence="2">
    <location>
        <begin position="27"/>
        <end position="110"/>
    </location>
</feature>
<feature type="domain" description="RRM 2" evidence="2">
    <location>
        <begin position="118"/>
        <end position="206"/>
    </location>
</feature>
<feature type="region of interest" description="Disordered" evidence="3">
    <location>
        <begin position="1"/>
        <end position="25"/>
    </location>
</feature>
<feature type="region of interest" description="Disordered" evidence="3">
    <location>
        <begin position="196"/>
        <end position="218"/>
    </location>
</feature>
<feature type="region of interest" description="Disordered" evidence="3">
    <location>
        <begin position="319"/>
        <end position="373"/>
    </location>
</feature>
<feature type="compositionally biased region" description="Gly residues" evidence="3">
    <location>
        <begin position="207"/>
        <end position="218"/>
    </location>
</feature>
<feature type="compositionally biased region" description="Low complexity" evidence="3">
    <location>
        <begin position="319"/>
        <end position="333"/>
    </location>
</feature>
<feature type="compositionally biased region" description="Gly residues" evidence="3">
    <location>
        <begin position="334"/>
        <end position="373"/>
    </location>
</feature>
<comment type="subcellular location">
    <subcellularLocation>
        <location evidence="1">Nucleus</location>
    </subcellularLocation>
    <text evidence="1">Component of ribonucleosomes.</text>
</comment>